<proteinExistence type="inferred from homology"/>
<comment type="function">
    <text evidence="1">Produces ATP from ADP in the presence of a proton gradient across the membrane. The alpha chain is a regulatory subunit.</text>
</comment>
<comment type="catalytic activity">
    <reaction evidence="1">
        <text>ATP + H2O + 4 H(+)(in) = ADP + phosphate + 5 H(+)(out)</text>
        <dbReference type="Rhea" id="RHEA:57720"/>
        <dbReference type="ChEBI" id="CHEBI:15377"/>
        <dbReference type="ChEBI" id="CHEBI:15378"/>
        <dbReference type="ChEBI" id="CHEBI:30616"/>
        <dbReference type="ChEBI" id="CHEBI:43474"/>
        <dbReference type="ChEBI" id="CHEBI:456216"/>
        <dbReference type="EC" id="7.1.2.2"/>
    </reaction>
</comment>
<comment type="subunit">
    <text evidence="1">F-type ATPases have 2 components, CF(1) - the catalytic core - and CF(0) - the membrane proton channel. CF(1) has five subunits: alpha(3), beta(3), gamma(1), delta(1), epsilon(1). CF(0) has three main subunits: a(1), b(2) and c(9-12). The alpha and beta chains form an alternating ring which encloses part of the gamma chain. CF(1) is attached to CF(0) by a central stalk formed by the gamma and epsilon chains, while a peripheral stalk is formed by the delta and b chains.</text>
</comment>
<comment type="subcellular location">
    <subcellularLocation>
        <location evidence="1">Cell membrane</location>
        <topology evidence="1">Peripheral membrane protein</topology>
    </subcellularLocation>
</comment>
<comment type="similarity">
    <text evidence="1">Belongs to the ATPase alpha/beta chains family.</text>
</comment>
<feature type="chain" id="PRO_0000256094" description="ATP synthase subunit alpha">
    <location>
        <begin position="1"/>
        <end position="503"/>
    </location>
</feature>
<feature type="binding site" evidence="1">
    <location>
        <begin position="169"/>
        <end position="176"/>
    </location>
    <ligand>
        <name>ATP</name>
        <dbReference type="ChEBI" id="CHEBI:30616"/>
    </ligand>
</feature>
<feature type="site" description="Required for activity" evidence="1">
    <location>
        <position position="362"/>
    </location>
</feature>
<name>ATPA_LIGS1</name>
<evidence type="ECO:0000255" key="1">
    <source>
        <dbReference type="HAMAP-Rule" id="MF_01346"/>
    </source>
</evidence>
<dbReference type="EC" id="7.1.2.2" evidence="1"/>
<dbReference type="EMBL" id="CP000233">
    <property type="protein sequence ID" value="ABD99407.1"/>
    <property type="molecule type" value="Genomic_DNA"/>
</dbReference>
<dbReference type="RefSeq" id="WP_011475837.1">
    <property type="nucleotide sequence ID" value="NC_007929.1"/>
</dbReference>
<dbReference type="RefSeq" id="YP_535490.1">
    <property type="nucleotide sequence ID" value="NC_007929.1"/>
</dbReference>
<dbReference type="SMR" id="Q1WUC8"/>
<dbReference type="STRING" id="362948.LSL_0598"/>
<dbReference type="KEGG" id="lsl:LSL_0598"/>
<dbReference type="PATRIC" id="fig|362948.14.peg.677"/>
<dbReference type="HOGENOM" id="CLU_010091_2_1_9"/>
<dbReference type="OrthoDB" id="9803053at2"/>
<dbReference type="Proteomes" id="UP000006559">
    <property type="component" value="Chromosome"/>
</dbReference>
<dbReference type="GO" id="GO:0005886">
    <property type="term" value="C:plasma membrane"/>
    <property type="evidence" value="ECO:0007669"/>
    <property type="project" value="UniProtKB-SubCell"/>
</dbReference>
<dbReference type="GO" id="GO:0045259">
    <property type="term" value="C:proton-transporting ATP synthase complex"/>
    <property type="evidence" value="ECO:0007669"/>
    <property type="project" value="UniProtKB-KW"/>
</dbReference>
<dbReference type="GO" id="GO:0043531">
    <property type="term" value="F:ADP binding"/>
    <property type="evidence" value="ECO:0007669"/>
    <property type="project" value="TreeGrafter"/>
</dbReference>
<dbReference type="GO" id="GO:0005524">
    <property type="term" value="F:ATP binding"/>
    <property type="evidence" value="ECO:0007669"/>
    <property type="project" value="UniProtKB-UniRule"/>
</dbReference>
<dbReference type="GO" id="GO:0046933">
    <property type="term" value="F:proton-transporting ATP synthase activity, rotational mechanism"/>
    <property type="evidence" value="ECO:0007669"/>
    <property type="project" value="UniProtKB-UniRule"/>
</dbReference>
<dbReference type="CDD" id="cd18113">
    <property type="entry name" value="ATP-synt_F1_alpha_C"/>
    <property type="match status" value="1"/>
</dbReference>
<dbReference type="CDD" id="cd18116">
    <property type="entry name" value="ATP-synt_F1_alpha_N"/>
    <property type="match status" value="1"/>
</dbReference>
<dbReference type="CDD" id="cd01132">
    <property type="entry name" value="F1-ATPase_alpha_CD"/>
    <property type="match status" value="1"/>
</dbReference>
<dbReference type="FunFam" id="1.20.150.20:FF:000001">
    <property type="entry name" value="ATP synthase subunit alpha"/>
    <property type="match status" value="1"/>
</dbReference>
<dbReference type="FunFam" id="2.40.30.20:FF:000001">
    <property type="entry name" value="ATP synthase subunit alpha"/>
    <property type="match status" value="1"/>
</dbReference>
<dbReference type="FunFam" id="3.40.50.300:FF:000002">
    <property type="entry name" value="ATP synthase subunit alpha"/>
    <property type="match status" value="1"/>
</dbReference>
<dbReference type="Gene3D" id="2.40.30.20">
    <property type="match status" value="1"/>
</dbReference>
<dbReference type="Gene3D" id="1.20.150.20">
    <property type="entry name" value="ATP synthase alpha/beta chain, C-terminal domain"/>
    <property type="match status" value="1"/>
</dbReference>
<dbReference type="Gene3D" id="3.40.50.300">
    <property type="entry name" value="P-loop containing nucleotide triphosphate hydrolases"/>
    <property type="match status" value="1"/>
</dbReference>
<dbReference type="HAMAP" id="MF_01346">
    <property type="entry name" value="ATP_synth_alpha_bact"/>
    <property type="match status" value="1"/>
</dbReference>
<dbReference type="InterPro" id="IPR023366">
    <property type="entry name" value="ATP_synth_asu-like_sf"/>
</dbReference>
<dbReference type="InterPro" id="IPR000793">
    <property type="entry name" value="ATP_synth_asu_C"/>
</dbReference>
<dbReference type="InterPro" id="IPR038376">
    <property type="entry name" value="ATP_synth_asu_C_sf"/>
</dbReference>
<dbReference type="InterPro" id="IPR033732">
    <property type="entry name" value="ATP_synth_F1_a_nt-bd_dom"/>
</dbReference>
<dbReference type="InterPro" id="IPR005294">
    <property type="entry name" value="ATP_synth_F1_asu"/>
</dbReference>
<dbReference type="InterPro" id="IPR020003">
    <property type="entry name" value="ATPase_a/bsu_AS"/>
</dbReference>
<dbReference type="InterPro" id="IPR004100">
    <property type="entry name" value="ATPase_F1/V1/A1_a/bsu_N"/>
</dbReference>
<dbReference type="InterPro" id="IPR036121">
    <property type="entry name" value="ATPase_F1/V1/A1_a/bsu_N_sf"/>
</dbReference>
<dbReference type="InterPro" id="IPR000194">
    <property type="entry name" value="ATPase_F1/V1/A1_a/bsu_nucl-bd"/>
</dbReference>
<dbReference type="InterPro" id="IPR027417">
    <property type="entry name" value="P-loop_NTPase"/>
</dbReference>
<dbReference type="NCBIfam" id="TIGR00962">
    <property type="entry name" value="atpA"/>
    <property type="match status" value="1"/>
</dbReference>
<dbReference type="NCBIfam" id="NF009884">
    <property type="entry name" value="PRK13343.1"/>
    <property type="match status" value="1"/>
</dbReference>
<dbReference type="PANTHER" id="PTHR48082">
    <property type="entry name" value="ATP SYNTHASE SUBUNIT ALPHA, MITOCHONDRIAL"/>
    <property type="match status" value="1"/>
</dbReference>
<dbReference type="PANTHER" id="PTHR48082:SF2">
    <property type="entry name" value="ATP SYNTHASE SUBUNIT ALPHA, MITOCHONDRIAL"/>
    <property type="match status" value="1"/>
</dbReference>
<dbReference type="Pfam" id="PF00006">
    <property type="entry name" value="ATP-synt_ab"/>
    <property type="match status" value="1"/>
</dbReference>
<dbReference type="Pfam" id="PF00306">
    <property type="entry name" value="ATP-synt_ab_C"/>
    <property type="match status" value="1"/>
</dbReference>
<dbReference type="Pfam" id="PF02874">
    <property type="entry name" value="ATP-synt_ab_N"/>
    <property type="match status" value="1"/>
</dbReference>
<dbReference type="PIRSF" id="PIRSF039088">
    <property type="entry name" value="F_ATPase_subunit_alpha"/>
    <property type="match status" value="1"/>
</dbReference>
<dbReference type="SUPFAM" id="SSF47917">
    <property type="entry name" value="C-terminal domain of alpha and beta subunits of F1 ATP synthase"/>
    <property type="match status" value="1"/>
</dbReference>
<dbReference type="SUPFAM" id="SSF50615">
    <property type="entry name" value="N-terminal domain of alpha and beta subunits of F1 ATP synthase"/>
    <property type="match status" value="1"/>
</dbReference>
<dbReference type="SUPFAM" id="SSF52540">
    <property type="entry name" value="P-loop containing nucleoside triphosphate hydrolases"/>
    <property type="match status" value="1"/>
</dbReference>
<dbReference type="PROSITE" id="PS00152">
    <property type="entry name" value="ATPASE_ALPHA_BETA"/>
    <property type="match status" value="1"/>
</dbReference>
<keyword id="KW-0066">ATP synthesis</keyword>
<keyword id="KW-0067">ATP-binding</keyword>
<keyword id="KW-1003">Cell membrane</keyword>
<keyword id="KW-0139">CF(1)</keyword>
<keyword id="KW-0375">Hydrogen ion transport</keyword>
<keyword id="KW-0406">Ion transport</keyword>
<keyword id="KW-0472">Membrane</keyword>
<keyword id="KW-0547">Nucleotide-binding</keyword>
<keyword id="KW-1185">Reference proteome</keyword>
<keyword id="KW-1278">Translocase</keyword>
<keyword id="KW-0813">Transport</keyword>
<organism>
    <name type="scientific">Ligilactobacillus salivarius (strain UCC118)</name>
    <name type="common">Lactobacillus salivarius</name>
    <dbReference type="NCBI Taxonomy" id="362948"/>
    <lineage>
        <taxon>Bacteria</taxon>
        <taxon>Bacillati</taxon>
        <taxon>Bacillota</taxon>
        <taxon>Bacilli</taxon>
        <taxon>Lactobacillales</taxon>
        <taxon>Lactobacillaceae</taxon>
        <taxon>Ligilactobacillus</taxon>
    </lineage>
</organism>
<sequence>MSIKAEEISALIKQQLANYQDELTVDEVGTVTYVGDGIARANGLDNALAGELVEFDDGTYGMAQNLESNDVGIIILGSFKGIREGDTVKRTGRIMEVPVGEELIGRVVNPLGQPIDGLGEVKTNKTRPVERKAPGVMERQSVTEPLQTGLKAIDALVPIGRGQRELVIGDRKTGKTSVAIDTIINQKDQDMICIYVAIGQKDSTVRTSVETLRKFGAMDYTIVVSAGPSSPAPLLYLAPYAGAAMGEEFMFNGKHVLIVYDDLSKQADAYRELSLILRRPPGREAYPGDVFYLHSRLLERAAKLSDELGGGSMTALPFIETKAGDVSAYIPTNVISITDGQIFLDSDRFYSGIRPAIDAGTSVSRVGGNAQVKAMKKVAGTLRTDLASYSELESFAQFGSDLDEATQAKLNRGRRTVEVLKQPLHKPLPVEKQVLILYALTHGFLDPVKVDDILPYQDGLFDYFDANHKDLLDEIANTGKLPETEKLDAAIKEYAATFQASEK</sequence>
<gene>
    <name evidence="1" type="primary">atpA</name>
    <name type="ordered locus">LSL_0598</name>
</gene>
<reference key="1">
    <citation type="journal article" date="2006" name="Proc. Natl. Acad. Sci. U.S.A.">
        <title>Multireplicon genome architecture of Lactobacillus salivarius.</title>
        <authorList>
            <person name="Claesson M.J."/>
            <person name="Li Y."/>
            <person name="Leahy S."/>
            <person name="Canchaya C."/>
            <person name="van Pijkeren J.P."/>
            <person name="Cerdeno-Tarraga A.M."/>
            <person name="Parkhill J."/>
            <person name="Flynn S."/>
            <person name="O'Sullivan G.C."/>
            <person name="Collins J.K."/>
            <person name="Higgins D."/>
            <person name="Shanahan F."/>
            <person name="Fitzgerald G.F."/>
            <person name="van Sinderen D."/>
            <person name="O'Toole P.W."/>
        </authorList>
    </citation>
    <scope>NUCLEOTIDE SEQUENCE [LARGE SCALE GENOMIC DNA]</scope>
    <source>
        <strain>UCC118</strain>
    </source>
</reference>
<accession>Q1WUC8</accession>
<protein>
    <recommendedName>
        <fullName evidence="1">ATP synthase subunit alpha</fullName>
        <ecNumber evidence="1">7.1.2.2</ecNumber>
    </recommendedName>
    <alternativeName>
        <fullName evidence="1">ATP synthase F1 sector subunit alpha</fullName>
    </alternativeName>
    <alternativeName>
        <fullName evidence="1">F-ATPase subunit alpha</fullName>
    </alternativeName>
</protein>